<evidence type="ECO:0000255" key="1">
    <source>
        <dbReference type="HAMAP-Rule" id="MF_01706"/>
    </source>
</evidence>
<sequence length="348" mass="36571">MPPSLLSLEGATVRFGGRAVLDDVGLGVAEHEVVCVLGPSGSGKSTLLRAVAGLQPLDAGRVTLDGRDQSGVPAHKREVGLMFQDHQLFPQRDVAGNIAFGPRMRGASRAEQQARVAELLQLVGLPGAARRSVAALSGGEQQRVALARALAPRPRLLMLDEPLGQLDRSLRERLVVELRELFGRLGTTVLAVTHDQGEAFALADRVVVMRDGRIAQSGTPLEVWQRPADAFVARFLGFENVAEASVAGQAADTPWGKVPVPEDAPQGTRTVLVRPAGVRVVPADEGLRCTVTARTFRGTHVAVHLQPEGAPRLEAACALRAAPEVGAAVGVEFDAADVVVLGGSGVPE</sequence>
<protein>
    <recommendedName>
        <fullName evidence="1">Fe(3+) ions import ATP-binding protein FbpC</fullName>
        <ecNumber evidence="1">7.2.2.7</ecNumber>
    </recommendedName>
</protein>
<feature type="chain" id="PRO_0000092366" description="Fe(3+) ions import ATP-binding protein FbpC">
    <location>
        <begin position="1"/>
        <end position="348"/>
    </location>
</feature>
<feature type="domain" description="ABC transporter" evidence="1">
    <location>
        <begin position="6"/>
        <end position="236"/>
    </location>
</feature>
<feature type="binding site" evidence="1">
    <location>
        <begin position="38"/>
        <end position="45"/>
    </location>
    <ligand>
        <name>ATP</name>
        <dbReference type="ChEBI" id="CHEBI:30616"/>
    </ligand>
</feature>
<organism>
    <name type="scientific">Streptomyces coelicolor (strain ATCC BAA-471 / A3(2) / M145)</name>
    <dbReference type="NCBI Taxonomy" id="100226"/>
    <lineage>
        <taxon>Bacteria</taxon>
        <taxon>Bacillati</taxon>
        <taxon>Actinomycetota</taxon>
        <taxon>Actinomycetes</taxon>
        <taxon>Kitasatosporales</taxon>
        <taxon>Streptomycetaceae</taxon>
        <taxon>Streptomyces</taxon>
        <taxon>Streptomyces albidoflavus group</taxon>
    </lineage>
</organism>
<dbReference type="EC" id="7.2.2.7" evidence="1"/>
<dbReference type="EMBL" id="AL939124">
    <property type="protein sequence ID" value="CAA19904.1"/>
    <property type="molecule type" value="Genomic_DNA"/>
</dbReference>
<dbReference type="PIR" id="T35450">
    <property type="entry name" value="T35450"/>
</dbReference>
<dbReference type="RefSeq" id="NP_629778.1">
    <property type="nucleotide sequence ID" value="NC_003888.3"/>
</dbReference>
<dbReference type="RefSeq" id="WP_011030362.1">
    <property type="nucleotide sequence ID" value="NZ_VNID01000024.1"/>
</dbReference>
<dbReference type="SMR" id="O86751"/>
<dbReference type="STRING" id="100226.gene:17763304"/>
<dbReference type="PaxDb" id="100226-SCO5648"/>
<dbReference type="KEGG" id="sco:SCO5648"/>
<dbReference type="PATRIC" id="fig|100226.15.peg.5731"/>
<dbReference type="eggNOG" id="COG3842">
    <property type="taxonomic scope" value="Bacteria"/>
</dbReference>
<dbReference type="HOGENOM" id="CLU_000604_1_1_11"/>
<dbReference type="InParanoid" id="O86751"/>
<dbReference type="OrthoDB" id="9802264at2"/>
<dbReference type="PhylomeDB" id="O86751"/>
<dbReference type="Proteomes" id="UP000001973">
    <property type="component" value="Chromosome"/>
</dbReference>
<dbReference type="GO" id="GO:0043190">
    <property type="term" value="C:ATP-binding cassette (ABC) transporter complex"/>
    <property type="evidence" value="ECO:0007669"/>
    <property type="project" value="InterPro"/>
</dbReference>
<dbReference type="GO" id="GO:0005886">
    <property type="term" value="C:plasma membrane"/>
    <property type="evidence" value="ECO:0000318"/>
    <property type="project" value="GO_Central"/>
</dbReference>
<dbReference type="GO" id="GO:0015408">
    <property type="term" value="F:ABC-type ferric iron transporter activity"/>
    <property type="evidence" value="ECO:0007669"/>
    <property type="project" value="UniProtKB-EC"/>
</dbReference>
<dbReference type="GO" id="GO:0005524">
    <property type="term" value="F:ATP binding"/>
    <property type="evidence" value="ECO:0007669"/>
    <property type="project" value="UniProtKB-KW"/>
</dbReference>
<dbReference type="GO" id="GO:0016887">
    <property type="term" value="F:ATP hydrolysis activity"/>
    <property type="evidence" value="ECO:0007669"/>
    <property type="project" value="InterPro"/>
</dbReference>
<dbReference type="GO" id="GO:0022857">
    <property type="term" value="F:transmembrane transporter activity"/>
    <property type="evidence" value="ECO:0000318"/>
    <property type="project" value="GO_Central"/>
</dbReference>
<dbReference type="GO" id="GO:0055085">
    <property type="term" value="P:transmembrane transport"/>
    <property type="evidence" value="ECO:0000318"/>
    <property type="project" value="GO_Central"/>
</dbReference>
<dbReference type="FunFam" id="3.40.50.300:FF:000425">
    <property type="entry name" value="Probable ABC transporter, ATP-binding subunit"/>
    <property type="match status" value="1"/>
</dbReference>
<dbReference type="Gene3D" id="3.40.50.300">
    <property type="entry name" value="P-loop containing nucleotide triphosphate hydrolases"/>
    <property type="match status" value="1"/>
</dbReference>
<dbReference type="InterPro" id="IPR003593">
    <property type="entry name" value="AAA+_ATPase"/>
</dbReference>
<dbReference type="InterPro" id="IPR050093">
    <property type="entry name" value="ABC_SmlMolc_Importer"/>
</dbReference>
<dbReference type="InterPro" id="IPR003439">
    <property type="entry name" value="ABC_transporter-like_ATP-bd"/>
</dbReference>
<dbReference type="InterPro" id="IPR017871">
    <property type="entry name" value="ABC_transporter-like_CS"/>
</dbReference>
<dbReference type="InterPro" id="IPR008995">
    <property type="entry name" value="Mo/tungstate-bd_C_term_dom"/>
</dbReference>
<dbReference type="InterPro" id="IPR027417">
    <property type="entry name" value="P-loop_NTPase"/>
</dbReference>
<dbReference type="InterPro" id="IPR013611">
    <property type="entry name" value="Transp-assoc_OB_typ2"/>
</dbReference>
<dbReference type="PANTHER" id="PTHR42781">
    <property type="entry name" value="SPERMIDINE/PUTRESCINE IMPORT ATP-BINDING PROTEIN POTA"/>
    <property type="match status" value="1"/>
</dbReference>
<dbReference type="PANTHER" id="PTHR42781:SF4">
    <property type="entry name" value="SPERMIDINE_PUTRESCINE IMPORT ATP-BINDING PROTEIN POTA"/>
    <property type="match status" value="1"/>
</dbReference>
<dbReference type="Pfam" id="PF00005">
    <property type="entry name" value="ABC_tran"/>
    <property type="match status" value="1"/>
</dbReference>
<dbReference type="Pfam" id="PF08402">
    <property type="entry name" value="TOBE_2"/>
    <property type="match status" value="1"/>
</dbReference>
<dbReference type="SMART" id="SM00382">
    <property type="entry name" value="AAA"/>
    <property type="match status" value="1"/>
</dbReference>
<dbReference type="SUPFAM" id="SSF50331">
    <property type="entry name" value="MOP-like"/>
    <property type="match status" value="1"/>
</dbReference>
<dbReference type="SUPFAM" id="SSF52540">
    <property type="entry name" value="P-loop containing nucleoside triphosphate hydrolases"/>
    <property type="match status" value="1"/>
</dbReference>
<dbReference type="PROSITE" id="PS00211">
    <property type="entry name" value="ABC_TRANSPORTER_1"/>
    <property type="match status" value="1"/>
</dbReference>
<dbReference type="PROSITE" id="PS50893">
    <property type="entry name" value="ABC_TRANSPORTER_2"/>
    <property type="match status" value="1"/>
</dbReference>
<dbReference type="PROSITE" id="PS51242">
    <property type="entry name" value="FBPC"/>
    <property type="match status" value="1"/>
</dbReference>
<accession>O86751</accession>
<gene>
    <name evidence="1" type="primary">fbpC</name>
    <name type="ordered locus">SCO5648</name>
    <name type="ORF">SC6A9.19c</name>
</gene>
<proteinExistence type="inferred from homology"/>
<name>FBPC_STRCO</name>
<comment type="function">
    <text evidence="1">Part of the ABC transporter complex FbpABC involved in Fe(3+) ions import. Responsible for energy coupling to the transport system.</text>
</comment>
<comment type="catalytic activity">
    <reaction evidence="1">
        <text>Fe(3+)(out) + ATP + H2O = Fe(3+)(in) + ADP + phosphate + H(+)</text>
        <dbReference type="Rhea" id="RHEA:12332"/>
        <dbReference type="ChEBI" id="CHEBI:15377"/>
        <dbReference type="ChEBI" id="CHEBI:15378"/>
        <dbReference type="ChEBI" id="CHEBI:29034"/>
        <dbReference type="ChEBI" id="CHEBI:30616"/>
        <dbReference type="ChEBI" id="CHEBI:43474"/>
        <dbReference type="ChEBI" id="CHEBI:456216"/>
        <dbReference type="EC" id="7.2.2.7"/>
    </reaction>
</comment>
<comment type="subunit">
    <text evidence="1">The complex is composed of two ATP-binding proteins (FbpC), two transmembrane proteins (FbpB) and a solute-binding protein (FbpA).</text>
</comment>
<comment type="subcellular location">
    <subcellularLocation>
        <location evidence="1">Cell membrane</location>
        <topology evidence="1">Peripheral membrane protein</topology>
    </subcellularLocation>
</comment>
<comment type="similarity">
    <text evidence="1">Belongs to the ABC transporter superfamily. Fe(3+) ion importer (TC 3.A.1.10) family.</text>
</comment>
<keyword id="KW-0067">ATP-binding</keyword>
<keyword id="KW-1003">Cell membrane</keyword>
<keyword id="KW-0406">Ion transport</keyword>
<keyword id="KW-0408">Iron</keyword>
<keyword id="KW-0410">Iron transport</keyword>
<keyword id="KW-0472">Membrane</keyword>
<keyword id="KW-0547">Nucleotide-binding</keyword>
<keyword id="KW-1185">Reference proteome</keyword>
<keyword id="KW-1278">Translocase</keyword>
<keyword id="KW-0813">Transport</keyword>
<reference key="1">
    <citation type="journal article" date="2002" name="Nature">
        <title>Complete genome sequence of the model actinomycete Streptomyces coelicolor A3(2).</title>
        <authorList>
            <person name="Bentley S.D."/>
            <person name="Chater K.F."/>
            <person name="Cerdeno-Tarraga A.-M."/>
            <person name="Challis G.L."/>
            <person name="Thomson N.R."/>
            <person name="James K.D."/>
            <person name="Harris D.E."/>
            <person name="Quail M.A."/>
            <person name="Kieser H."/>
            <person name="Harper D."/>
            <person name="Bateman A."/>
            <person name="Brown S."/>
            <person name="Chandra G."/>
            <person name="Chen C.W."/>
            <person name="Collins M."/>
            <person name="Cronin A."/>
            <person name="Fraser A."/>
            <person name="Goble A."/>
            <person name="Hidalgo J."/>
            <person name="Hornsby T."/>
            <person name="Howarth S."/>
            <person name="Huang C.-H."/>
            <person name="Kieser T."/>
            <person name="Larke L."/>
            <person name="Murphy L.D."/>
            <person name="Oliver K."/>
            <person name="O'Neil S."/>
            <person name="Rabbinowitsch E."/>
            <person name="Rajandream M.A."/>
            <person name="Rutherford K.M."/>
            <person name="Rutter S."/>
            <person name="Seeger K."/>
            <person name="Saunders D."/>
            <person name="Sharp S."/>
            <person name="Squares R."/>
            <person name="Squares S."/>
            <person name="Taylor K."/>
            <person name="Warren T."/>
            <person name="Wietzorrek A."/>
            <person name="Woodward J.R."/>
            <person name="Barrell B.G."/>
            <person name="Parkhill J."/>
            <person name="Hopwood D.A."/>
        </authorList>
    </citation>
    <scope>NUCLEOTIDE SEQUENCE [LARGE SCALE GENOMIC DNA]</scope>
    <source>
        <strain>ATCC BAA-471 / A3(2) / M145</strain>
    </source>
</reference>